<reference key="1">
    <citation type="journal article" date="2006" name="Nature">
        <title>Insights from the genome of the biotrophic fungal plant pathogen Ustilago maydis.</title>
        <authorList>
            <person name="Kaemper J."/>
            <person name="Kahmann R."/>
            <person name="Boelker M."/>
            <person name="Ma L.-J."/>
            <person name="Brefort T."/>
            <person name="Saville B.J."/>
            <person name="Banuett F."/>
            <person name="Kronstad J.W."/>
            <person name="Gold S.E."/>
            <person name="Mueller O."/>
            <person name="Perlin M.H."/>
            <person name="Woesten H.A.B."/>
            <person name="de Vries R."/>
            <person name="Ruiz-Herrera J."/>
            <person name="Reynaga-Pena C.G."/>
            <person name="Snetselaar K."/>
            <person name="McCann M."/>
            <person name="Perez-Martin J."/>
            <person name="Feldbruegge M."/>
            <person name="Basse C.W."/>
            <person name="Steinberg G."/>
            <person name="Ibeas J.I."/>
            <person name="Holloman W."/>
            <person name="Guzman P."/>
            <person name="Farman M.L."/>
            <person name="Stajich J.E."/>
            <person name="Sentandreu R."/>
            <person name="Gonzalez-Prieto J.M."/>
            <person name="Kennell J.C."/>
            <person name="Molina L."/>
            <person name="Schirawski J."/>
            <person name="Mendoza-Mendoza A."/>
            <person name="Greilinger D."/>
            <person name="Muench K."/>
            <person name="Roessel N."/>
            <person name="Scherer M."/>
            <person name="Vranes M."/>
            <person name="Ladendorf O."/>
            <person name="Vincon V."/>
            <person name="Fuchs U."/>
            <person name="Sandrock B."/>
            <person name="Meng S."/>
            <person name="Ho E.C.H."/>
            <person name="Cahill M.J."/>
            <person name="Boyce K.J."/>
            <person name="Klose J."/>
            <person name="Klosterman S.J."/>
            <person name="Deelstra H.J."/>
            <person name="Ortiz-Castellanos L."/>
            <person name="Li W."/>
            <person name="Sanchez-Alonso P."/>
            <person name="Schreier P.H."/>
            <person name="Haeuser-Hahn I."/>
            <person name="Vaupel M."/>
            <person name="Koopmann E."/>
            <person name="Friedrich G."/>
            <person name="Voss H."/>
            <person name="Schlueter T."/>
            <person name="Margolis J."/>
            <person name="Platt D."/>
            <person name="Swimmer C."/>
            <person name="Gnirke A."/>
            <person name="Chen F."/>
            <person name="Vysotskaia V."/>
            <person name="Mannhaupt G."/>
            <person name="Gueldener U."/>
            <person name="Muensterkoetter M."/>
            <person name="Haase D."/>
            <person name="Oesterheld M."/>
            <person name="Mewes H.-W."/>
            <person name="Mauceli E.W."/>
            <person name="DeCaprio D."/>
            <person name="Wade C.M."/>
            <person name="Butler J."/>
            <person name="Young S.K."/>
            <person name="Jaffe D.B."/>
            <person name="Calvo S.E."/>
            <person name="Nusbaum C."/>
            <person name="Galagan J.E."/>
            <person name="Birren B.W."/>
        </authorList>
    </citation>
    <scope>NUCLEOTIDE SEQUENCE [LARGE SCALE GENOMIC DNA]</scope>
    <source>
        <strain>DSM 14603 / FGSC 9021 / UM521</strain>
    </source>
</reference>
<reference key="2">
    <citation type="submission" date="2014-09" db="EMBL/GenBank/DDBJ databases">
        <authorList>
            <person name="Gueldener U."/>
            <person name="Muensterkoetter M."/>
            <person name="Walter M.C."/>
            <person name="Mannhaupt G."/>
            <person name="Kahmann R."/>
        </authorList>
    </citation>
    <scope>GENOME REANNOTATION</scope>
    <source>
        <strain>DSM 14603 / FGSC 9021 / UM521</strain>
    </source>
</reference>
<reference key="3">
    <citation type="journal article" date="2011" name="Antonie Van Leeuwenhoek">
        <title>Absence of repellents in Ustilago maydis induces genes encoding small secreted proteins.</title>
        <authorList>
            <person name="Teertstra W.R."/>
            <person name="Krijgsheld P."/>
            <person name="Woesten H.A."/>
        </authorList>
    </citation>
    <scope>FUNCTION</scope>
    <scope>INDUCTION</scope>
    <scope>SUBCELLULAR LOCATION</scope>
</reference>
<accession>A0A0D1E951</accession>
<protein>
    <recommendedName>
        <fullName evidence="4">Secreted cysteine-rich protein UMAG_00792</fullName>
    </recommendedName>
    <alternativeName>
        <fullName evidence="4">SCRP UMAG_00792</fullName>
    </alternativeName>
</protein>
<evidence type="ECO:0000255" key="1"/>
<evidence type="ECO:0000255" key="2">
    <source>
        <dbReference type="PROSITE-ProRule" id="PRU00498"/>
    </source>
</evidence>
<evidence type="ECO:0000269" key="3">
    <source>
    </source>
</evidence>
<evidence type="ECO:0000303" key="4">
    <source>
    </source>
</evidence>
<evidence type="ECO:0000305" key="5">
    <source>
    </source>
</evidence>
<proteinExistence type="evidence at transcript level"/>
<dbReference type="EMBL" id="CM003140">
    <property type="protein sequence ID" value="KIS72389.1"/>
    <property type="molecule type" value="Genomic_DNA"/>
</dbReference>
<dbReference type="RefSeq" id="XP_011386564.1">
    <property type="nucleotide sequence ID" value="XM_011388262.1"/>
</dbReference>
<dbReference type="EnsemblFungi" id="KIS72389">
    <property type="protein sequence ID" value="KIS72389"/>
    <property type="gene ID" value="UMAG_00792"/>
</dbReference>
<dbReference type="GeneID" id="23561997"/>
<dbReference type="KEGG" id="uma:UMAG_00792"/>
<dbReference type="VEuPathDB" id="FungiDB:UMAG_00792"/>
<dbReference type="eggNOG" id="ENOG502R2YZ">
    <property type="taxonomic scope" value="Eukaryota"/>
</dbReference>
<dbReference type="InParanoid" id="A0A0D1E951"/>
<dbReference type="OrthoDB" id="2555525at2759"/>
<dbReference type="Proteomes" id="UP000000561">
    <property type="component" value="Chromosome 1"/>
</dbReference>
<name>UM792_MYCMD</name>
<comment type="function">
    <text evidence="3">Secreted cysteine-rich protein that might form amyloid strutures which are involved in attachment to hydrophobic surfaces and in formation of hydrophobic aerial hyphae.</text>
</comment>
<comment type="subunit">
    <text evidence="5">Secreted cysteine-rich proteins (SCRPs) are predicted to form amyloids.</text>
</comment>
<comment type="subcellular location">
    <subcellularLocation>
        <location evidence="3">Secreted</location>
    </subcellularLocation>
</comment>
<comment type="induction">
    <text evidence="3">Expression is highly induced in filaments that grow at the water-air interface when repellent gene rep1 is absent.</text>
</comment>
<gene>
    <name type="ORF">UMAG_00792</name>
</gene>
<keyword id="KW-0325">Glycoprotein</keyword>
<keyword id="KW-1185">Reference proteome</keyword>
<keyword id="KW-0964">Secreted</keyword>
<keyword id="KW-0732">Signal</keyword>
<organism>
    <name type="scientific">Mycosarcoma maydis</name>
    <name type="common">Corn smut fungus</name>
    <name type="synonym">Ustilago maydis</name>
    <dbReference type="NCBI Taxonomy" id="5270"/>
    <lineage>
        <taxon>Eukaryota</taxon>
        <taxon>Fungi</taxon>
        <taxon>Dikarya</taxon>
        <taxon>Basidiomycota</taxon>
        <taxon>Ustilaginomycotina</taxon>
        <taxon>Ustilaginomycetes</taxon>
        <taxon>Ustilaginales</taxon>
        <taxon>Ustilaginaceae</taxon>
        <taxon>Mycosarcoma</taxon>
    </lineage>
</organism>
<sequence>MVSFKSSSLFLHSLSALLVLTTLSSAAVNAGFVEMEIDTDEHTQPPKNAAYACVIKSTSCKSTSHFTSDVTYSPALNVTTCHHNGPLRNMWNRVVPWSDGHGMFVNTFYVADVQSDVSRTKADCDVSKLGKKTADDIRDIMDDNINTQTSCNAYIQCYDIKDVDNKCLPVSKDD</sequence>
<feature type="signal peptide" evidence="1">
    <location>
        <begin position="1"/>
        <end position="26"/>
    </location>
</feature>
<feature type="chain" id="PRO_5002240744" description="Secreted cysteine-rich protein UMAG_00792">
    <location>
        <begin position="27"/>
        <end position="174"/>
    </location>
</feature>
<feature type="glycosylation site" description="N-linked (GlcNAc...) asparagine" evidence="2">
    <location>
        <position position="77"/>
    </location>
</feature>